<accession>Q0BJW1</accession>
<feature type="chain" id="PRO_1000048614" description="Chromosomal replication initiator protein DnaA">
    <location>
        <begin position="1"/>
        <end position="525"/>
    </location>
</feature>
<feature type="region of interest" description="Domain I, interacts with DnaA modulators" evidence="1">
    <location>
        <begin position="1"/>
        <end position="71"/>
    </location>
</feature>
<feature type="region of interest" description="Domain II" evidence="1">
    <location>
        <begin position="71"/>
        <end position="188"/>
    </location>
</feature>
<feature type="region of interest" description="Disordered" evidence="2">
    <location>
        <begin position="160"/>
        <end position="182"/>
    </location>
</feature>
<feature type="region of interest" description="Domain III, AAA+ region" evidence="1">
    <location>
        <begin position="189"/>
        <end position="405"/>
    </location>
</feature>
<feature type="region of interest" description="Domain IV, binds dsDNA" evidence="1">
    <location>
        <begin position="406"/>
        <end position="525"/>
    </location>
</feature>
<feature type="compositionally biased region" description="Low complexity" evidence="2">
    <location>
        <begin position="169"/>
        <end position="181"/>
    </location>
</feature>
<feature type="binding site" evidence="1">
    <location>
        <position position="233"/>
    </location>
    <ligand>
        <name>ATP</name>
        <dbReference type="ChEBI" id="CHEBI:30616"/>
    </ligand>
</feature>
<feature type="binding site" evidence="1">
    <location>
        <position position="235"/>
    </location>
    <ligand>
        <name>ATP</name>
        <dbReference type="ChEBI" id="CHEBI:30616"/>
    </ligand>
</feature>
<feature type="binding site" evidence="1">
    <location>
        <position position="236"/>
    </location>
    <ligand>
        <name>ATP</name>
        <dbReference type="ChEBI" id="CHEBI:30616"/>
    </ligand>
</feature>
<feature type="binding site" evidence="1">
    <location>
        <position position="237"/>
    </location>
    <ligand>
        <name>ATP</name>
        <dbReference type="ChEBI" id="CHEBI:30616"/>
    </ligand>
</feature>
<gene>
    <name evidence="1" type="primary">dnaA</name>
    <name type="ordered locus">Bamb_0001</name>
</gene>
<organism>
    <name type="scientific">Burkholderia ambifaria (strain ATCC BAA-244 / DSM 16087 / CCUG 44356 / LMG 19182 / AMMD)</name>
    <name type="common">Burkholderia cepacia (strain AMMD)</name>
    <dbReference type="NCBI Taxonomy" id="339670"/>
    <lineage>
        <taxon>Bacteria</taxon>
        <taxon>Pseudomonadati</taxon>
        <taxon>Pseudomonadota</taxon>
        <taxon>Betaproteobacteria</taxon>
        <taxon>Burkholderiales</taxon>
        <taxon>Burkholderiaceae</taxon>
        <taxon>Burkholderia</taxon>
        <taxon>Burkholderia cepacia complex</taxon>
    </lineage>
</organism>
<sequence>MNDFWQHCSALLERELTPQQYVTWIKPLAPVAFDASANTLSIAAPNRFKLDWVKSQFSGRISDLARDFWNAPIEVQFVLDPKAGMRSAAAHAAPAAQRAPLTPNGPAATVAAIAANLAANAGAAPSAPADVPMTASAAAAHHLNADDADIDLPSLPAHEAAAGRRTWRPGPGAAPANGGEADSMYERSKLNPVLTFDNFVTGKANQLARAAAIQVADNPGISYNPLFLYGGVGLGKTHLIHAIGNQLLLDKAGARIRYIHAEQYVSDVVKAYQRKAFDDFKRYYHSLDLLLIDDIQFFSGKSRTQEEFFYAFEALVANKAQVIITSDTYPKEISGIDDRLISRFDSGLTVAIEPPELEMRVAILMRKAQSEGVNLSEDVAFFVAKHLRSNVRELEGALRKILAYSKFHGREISIELTKEALKDLLTVQNRQISVENIQKTVADFYNIKVADMYSKKRPANIARPRQIAMYLAKELTQKSLPEIGELFGGRDHTTVLHAVRKIADERSKDAQLNHELHVLEQTLKG</sequence>
<reference key="1">
    <citation type="submission" date="2006-08" db="EMBL/GenBank/DDBJ databases">
        <title>Complete sequence of chromosome 1 of Burkholderia cepacia AMMD.</title>
        <authorList>
            <person name="Copeland A."/>
            <person name="Lucas S."/>
            <person name="Lapidus A."/>
            <person name="Barry K."/>
            <person name="Detter J.C."/>
            <person name="Glavina del Rio T."/>
            <person name="Hammon N."/>
            <person name="Israni S."/>
            <person name="Pitluck S."/>
            <person name="Bruce D."/>
            <person name="Chain P."/>
            <person name="Malfatti S."/>
            <person name="Shin M."/>
            <person name="Vergez L."/>
            <person name="Schmutz J."/>
            <person name="Larimer F."/>
            <person name="Land M."/>
            <person name="Hauser L."/>
            <person name="Kyrpides N."/>
            <person name="Kim E."/>
            <person name="Parke J."/>
            <person name="Coenye T."/>
            <person name="Konstantinidis K."/>
            <person name="Ramette A."/>
            <person name="Tiedje J."/>
            <person name="Richardson P."/>
        </authorList>
    </citation>
    <scope>NUCLEOTIDE SEQUENCE [LARGE SCALE GENOMIC DNA]</scope>
    <source>
        <strain>ATCC BAA-244 / DSM 16087 / CCUG 44356 / LMG 19182 / AMMD</strain>
    </source>
</reference>
<evidence type="ECO:0000255" key="1">
    <source>
        <dbReference type="HAMAP-Rule" id="MF_00377"/>
    </source>
</evidence>
<evidence type="ECO:0000256" key="2">
    <source>
        <dbReference type="SAM" id="MobiDB-lite"/>
    </source>
</evidence>
<protein>
    <recommendedName>
        <fullName evidence="1">Chromosomal replication initiator protein DnaA</fullName>
    </recommendedName>
</protein>
<proteinExistence type="inferred from homology"/>
<dbReference type="EMBL" id="CP000440">
    <property type="protein sequence ID" value="ABI85562.1"/>
    <property type="molecule type" value="Genomic_DNA"/>
</dbReference>
<dbReference type="RefSeq" id="WP_011655544.1">
    <property type="nucleotide sequence ID" value="NZ_CP009798.1"/>
</dbReference>
<dbReference type="SMR" id="Q0BJW1"/>
<dbReference type="GeneID" id="93084589"/>
<dbReference type="KEGG" id="bam:Bamb_0001"/>
<dbReference type="PATRIC" id="fig|339670.21.peg.1637"/>
<dbReference type="eggNOG" id="COG0593">
    <property type="taxonomic scope" value="Bacteria"/>
</dbReference>
<dbReference type="Proteomes" id="UP000000662">
    <property type="component" value="Chromosome 1"/>
</dbReference>
<dbReference type="GO" id="GO:0005737">
    <property type="term" value="C:cytoplasm"/>
    <property type="evidence" value="ECO:0007669"/>
    <property type="project" value="UniProtKB-SubCell"/>
</dbReference>
<dbReference type="GO" id="GO:0005886">
    <property type="term" value="C:plasma membrane"/>
    <property type="evidence" value="ECO:0007669"/>
    <property type="project" value="TreeGrafter"/>
</dbReference>
<dbReference type="GO" id="GO:0005524">
    <property type="term" value="F:ATP binding"/>
    <property type="evidence" value="ECO:0007669"/>
    <property type="project" value="UniProtKB-UniRule"/>
</dbReference>
<dbReference type="GO" id="GO:0016887">
    <property type="term" value="F:ATP hydrolysis activity"/>
    <property type="evidence" value="ECO:0007669"/>
    <property type="project" value="InterPro"/>
</dbReference>
<dbReference type="GO" id="GO:0003688">
    <property type="term" value="F:DNA replication origin binding"/>
    <property type="evidence" value="ECO:0007669"/>
    <property type="project" value="UniProtKB-UniRule"/>
</dbReference>
<dbReference type="GO" id="GO:0008289">
    <property type="term" value="F:lipid binding"/>
    <property type="evidence" value="ECO:0007669"/>
    <property type="project" value="UniProtKB-KW"/>
</dbReference>
<dbReference type="GO" id="GO:0006270">
    <property type="term" value="P:DNA replication initiation"/>
    <property type="evidence" value="ECO:0007669"/>
    <property type="project" value="UniProtKB-UniRule"/>
</dbReference>
<dbReference type="GO" id="GO:0006275">
    <property type="term" value="P:regulation of DNA replication"/>
    <property type="evidence" value="ECO:0007669"/>
    <property type="project" value="UniProtKB-UniRule"/>
</dbReference>
<dbReference type="CDD" id="cd00009">
    <property type="entry name" value="AAA"/>
    <property type="match status" value="1"/>
</dbReference>
<dbReference type="CDD" id="cd06571">
    <property type="entry name" value="Bac_DnaA_C"/>
    <property type="match status" value="1"/>
</dbReference>
<dbReference type="FunFam" id="1.10.8.60:FF:000003">
    <property type="entry name" value="Chromosomal replication initiator protein DnaA"/>
    <property type="match status" value="1"/>
</dbReference>
<dbReference type="FunFam" id="3.40.50.300:FF:000668">
    <property type="entry name" value="Chromosomal replication initiator protein DnaA"/>
    <property type="match status" value="1"/>
</dbReference>
<dbReference type="Gene3D" id="1.10.1750.10">
    <property type="match status" value="1"/>
</dbReference>
<dbReference type="Gene3D" id="1.10.8.60">
    <property type="match status" value="1"/>
</dbReference>
<dbReference type="Gene3D" id="3.30.300.180">
    <property type="match status" value="1"/>
</dbReference>
<dbReference type="Gene3D" id="3.40.50.300">
    <property type="entry name" value="P-loop containing nucleotide triphosphate hydrolases"/>
    <property type="match status" value="1"/>
</dbReference>
<dbReference type="HAMAP" id="MF_00377">
    <property type="entry name" value="DnaA_bact"/>
    <property type="match status" value="1"/>
</dbReference>
<dbReference type="InterPro" id="IPR003593">
    <property type="entry name" value="AAA+_ATPase"/>
</dbReference>
<dbReference type="InterPro" id="IPR001957">
    <property type="entry name" value="Chromosome_initiator_DnaA"/>
</dbReference>
<dbReference type="InterPro" id="IPR020591">
    <property type="entry name" value="Chromosome_initiator_DnaA-like"/>
</dbReference>
<dbReference type="InterPro" id="IPR018312">
    <property type="entry name" value="Chromosome_initiator_DnaA_CS"/>
</dbReference>
<dbReference type="InterPro" id="IPR013159">
    <property type="entry name" value="DnaA_C"/>
</dbReference>
<dbReference type="InterPro" id="IPR013317">
    <property type="entry name" value="DnaA_dom"/>
</dbReference>
<dbReference type="InterPro" id="IPR024633">
    <property type="entry name" value="DnaA_N_dom"/>
</dbReference>
<dbReference type="InterPro" id="IPR038454">
    <property type="entry name" value="DnaA_N_sf"/>
</dbReference>
<dbReference type="InterPro" id="IPR027417">
    <property type="entry name" value="P-loop_NTPase"/>
</dbReference>
<dbReference type="InterPro" id="IPR010921">
    <property type="entry name" value="Trp_repressor/repl_initiator"/>
</dbReference>
<dbReference type="NCBIfam" id="TIGR00362">
    <property type="entry name" value="DnaA"/>
    <property type="match status" value="1"/>
</dbReference>
<dbReference type="PANTHER" id="PTHR30050">
    <property type="entry name" value="CHROMOSOMAL REPLICATION INITIATOR PROTEIN DNAA"/>
    <property type="match status" value="1"/>
</dbReference>
<dbReference type="PANTHER" id="PTHR30050:SF2">
    <property type="entry name" value="CHROMOSOMAL REPLICATION INITIATOR PROTEIN DNAA"/>
    <property type="match status" value="1"/>
</dbReference>
<dbReference type="Pfam" id="PF00308">
    <property type="entry name" value="Bac_DnaA"/>
    <property type="match status" value="1"/>
</dbReference>
<dbReference type="Pfam" id="PF08299">
    <property type="entry name" value="Bac_DnaA_C"/>
    <property type="match status" value="1"/>
</dbReference>
<dbReference type="Pfam" id="PF11638">
    <property type="entry name" value="DnaA_N"/>
    <property type="match status" value="1"/>
</dbReference>
<dbReference type="PRINTS" id="PR00051">
    <property type="entry name" value="DNAA"/>
</dbReference>
<dbReference type="SMART" id="SM00382">
    <property type="entry name" value="AAA"/>
    <property type="match status" value="1"/>
</dbReference>
<dbReference type="SMART" id="SM00760">
    <property type="entry name" value="Bac_DnaA_C"/>
    <property type="match status" value="1"/>
</dbReference>
<dbReference type="SUPFAM" id="SSF52540">
    <property type="entry name" value="P-loop containing nucleoside triphosphate hydrolases"/>
    <property type="match status" value="1"/>
</dbReference>
<dbReference type="SUPFAM" id="SSF48295">
    <property type="entry name" value="TrpR-like"/>
    <property type="match status" value="1"/>
</dbReference>
<dbReference type="PROSITE" id="PS01008">
    <property type="entry name" value="DNAA"/>
    <property type="match status" value="1"/>
</dbReference>
<keyword id="KW-0067">ATP-binding</keyword>
<keyword id="KW-0963">Cytoplasm</keyword>
<keyword id="KW-0235">DNA replication</keyword>
<keyword id="KW-0238">DNA-binding</keyword>
<keyword id="KW-0446">Lipid-binding</keyword>
<keyword id="KW-0547">Nucleotide-binding</keyword>
<comment type="function">
    <text evidence="1">Plays an essential role in the initiation and regulation of chromosomal replication. ATP-DnaA binds to the origin of replication (oriC) to initiate formation of the DNA replication initiation complex once per cell cycle. Binds the DnaA box (a 9 base pair repeat at the origin) and separates the double-stranded (ds)DNA. Forms a right-handed helical filament on oriC DNA; dsDNA binds to the exterior of the filament while single-stranded (ss)DNA is stabiized in the filament's interior. The ATP-DnaA-oriC complex binds and stabilizes one strand of the AT-rich DNA unwinding element (DUE), permitting loading of DNA polymerase. After initiation quickly degrades to an ADP-DnaA complex that is not apt for DNA replication. Binds acidic phospholipids.</text>
</comment>
<comment type="subunit">
    <text evidence="1">Oligomerizes as a right-handed, spiral filament on DNA at oriC.</text>
</comment>
<comment type="subcellular location">
    <subcellularLocation>
        <location evidence="1">Cytoplasm</location>
    </subcellularLocation>
</comment>
<comment type="domain">
    <text evidence="1">Domain I is involved in oligomerization and binding regulators, domain II is flexibile and of varying length in different bacteria, domain III forms the AAA+ region, while domain IV binds dsDNA.</text>
</comment>
<comment type="similarity">
    <text evidence="1">Belongs to the DnaA family.</text>
</comment>
<name>DNAA_BURCM</name>